<proteinExistence type="inferred from homology"/>
<protein>
    <recommendedName>
        <fullName evidence="1">Undecaprenyl-diphosphatase</fullName>
        <ecNumber evidence="1">3.6.1.27</ecNumber>
    </recommendedName>
    <alternativeName>
        <fullName evidence="1">Bacitracin resistance protein</fullName>
    </alternativeName>
    <alternativeName>
        <fullName evidence="1">Undecaprenyl pyrophosphate phosphatase</fullName>
    </alternativeName>
</protein>
<accession>A1AFX9</accession>
<evidence type="ECO:0000255" key="1">
    <source>
        <dbReference type="HAMAP-Rule" id="MF_01006"/>
    </source>
</evidence>
<comment type="function">
    <text evidence="1">Catalyzes the dephosphorylation of undecaprenyl diphosphate (UPP). Confers resistance to bacitracin.</text>
</comment>
<comment type="catalytic activity">
    <reaction evidence="1">
        <text>di-trans,octa-cis-undecaprenyl diphosphate + H2O = di-trans,octa-cis-undecaprenyl phosphate + phosphate + H(+)</text>
        <dbReference type="Rhea" id="RHEA:28094"/>
        <dbReference type="ChEBI" id="CHEBI:15377"/>
        <dbReference type="ChEBI" id="CHEBI:15378"/>
        <dbReference type="ChEBI" id="CHEBI:43474"/>
        <dbReference type="ChEBI" id="CHEBI:58405"/>
        <dbReference type="ChEBI" id="CHEBI:60392"/>
        <dbReference type="EC" id="3.6.1.27"/>
    </reaction>
</comment>
<comment type="subcellular location">
    <subcellularLocation>
        <location evidence="1">Cell inner membrane</location>
        <topology evidence="1">Multi-pass membrane protein</topology>
    </subcellularLocation>
</comment>
<comment type="miscellaneous">
    <text>Bacitracin is thought to be involved in the inhibition of peptidoglycan synthesis by sequestering undecaprenyl diphosphate, thereby reducing the pool of lipid carrier available.</text>
</comment>
<comment type="similarity">
    <text evidence="1">Belongs to the UppP family.</text>
</comment>
<name>UPPP_ECOK1</name>
<feature type="chain" id="PRO_0000290707" description="Undecaprenyl-diphosphatase">
    <location>
        <begin position="1"/>
        <end position="273"/>
    </location>
</feature>
<feature type="transmembrane region" description="Helical" evidence="1">
    <location>
        <begin position="6"/>
        <end position="26"/>
    </location>
</feature>
<feature type="transmembrane region" description="Helical" evidence="1">
    <location>
        <begin position="45"/>
        <end position="65"/>
    </location>
</feature>
<feature type="transmembrane region" description="Helical" evidence="1">
    <location>
        <begin position="90"/>
        <end position="110"/>
    </location>
</feature>
<feature type="transmembrane region" description="Helical" evidence="1">
    <location>
        <begin position="116"/>
        <end position="136"/>
    </location>
</feature>
<feature type="transmembrane region" description="Helical" evidence="1">
    <location>
        <begin position="190"/>
        <end position="210"/>
    </location>
</feature>
<feature type="transmembrane region" description="Helical" evidence="1">
    <location>
        <begin position="222"/>
        <end position="242"/>
    </location>
</feature>
<feature type="transmembrane region" description="Helical" evidence="1">
    <location>
        <begin position="252"/>
        <end position="272"/>
    </location>
</feature>
<gene>
    <name evidence="1" type="primary">uppP</name>
    <name type="ordered locus">Ecok1_30750</name>
    <name type="ORF">APECO1_3357</name>
</gene>
<organism>
    <name type="scientific">Escherichia coli O1:K1 / APEC</name>
    <dbReference type="NCBI Taxonomy" id="405955"/>
    <lineage>
        <taxon>Bacteria</taxon>
        <taxon>Pseudomonadati</taxon>
        <taxon>Pseudomonadota</taxon>
        <taxon>Gammaproteobacteria</taxon>
        <taxon>Enterobacterales</taxon>
        <taxon>Enterobacteriaceae</taxon>
        <taxon>Escherichia</taxon>
    </lineage>
</organism>
<keyword id="KW-0046">Antibiotic resistance</keyword>
<keyword id="KW-0997">Cell inner membrane</keyword>
<keyword id="KW-1003">Cell membrane</keyword>
<keyword id="KW-0133">Cell shape</keyword>
<keyword id="KW-0961">Cell wall biogenesis/degradation</keyword>
<keyword id="KW-0378">Hydrolase</keyword>
<keyword id="KW-0472">Membrane</keyword>
<keyword id="KW-0573">Peptidoglycan synthesis</keyword>
<keyword id="KW-1185">Reference proteome</keyword>
<keyword id="KW-0812">Transmembrane</keyword>
<keyword id="KW-1133">Transmembrane helix</keyword>
<sequence length="273" mass="29773">MSDMHSLLIAAILGVVEGLTEFLPVSSTGHMIIVGHLLGFEGDTAKTFEVVIQLGSILAVVVMFWRRLFGLIGIHFGRPLQHEGESKGRLTLIHILLGMIPAVVLGLLFHDTIKSLFNPINVMYALVVGGLLLIAAECLKPKEPRAPGLDDMTYRQAFMIGCFQCLALWPGFSRSGATISGGMLMGVSRYAASEFSFLLAVPMMMGATALDLYKSWGFLTTGDIPMFAVGFITAFVVALIAIKTFLQLIKRISFIPFAIYRFIVAAAVYVVFF</sequence>
<reference key="1">
    <citation type="journal article" date="2007" name="J. Bacteriol.">
        <title>The genome sequence of avian pathogenic Escherichia coli strain O1:K1:H7 shares strong similarities with human extraintestinal pathogenic E. coli genomes.</title>
        <authorList>
            <person name="Johnson T.J."/>
            <person name="Kariyawasam S."/>
            <person name="Wannemuehler Y."/>
            <person name="Mangiamele P."/>
            <person name="Johnson S.J."/>
            <person name="Doetkott C."/>
            <person name="Skyberg J.A."/>
            <person name="Lynne A.M."/>
            <person name="Johnson J.R."/>
            <person name="Nolan L.K."/>
        </authorList>
    </citation>
    <scope>NUCLEOTIDE SEQUENCE [LARGE SCALE GENOMIC DNA]</scope>
</reference>
<dbReference type="EC" id="3.6.1.27" evidence="1"/>
<dbReference type="EMBL" id="CP000468">
    <property type="protein sequence ID" value="ABJ02569.1"/>
    <property type="molecule type" value="Genomic_DNA"/>
</dbReference>
<dbReference type="SMR" id="A1AFX9"/>
<dbReference type="KEGG" id="ecv:APECO1_3357"/>
<dbReference type="HOGENOM" id="CLU_060296_2_0_6"/>
<dbReference type="Proteomes" id="UP000008216">
    <property type="component" value="Chromosome"/>
</dbReference>
<dbReference type="GO" id="GO:0005886">
    <property type="term" value="C:plasma membrane"/>
    <property type="evidence" value="ECO:0007669"/>
    <property type="project" value="UniProtKB-SubCell"/>
</dbReference>
<dbReference type="GO" id="GO:0050380">
    <property type="term" value="F:undecaprenyl-diphosphatase activity"/>
    <property type="evidence" value="ECO:0007669"/>
    <property type="project" value="UniProtKB-UniRule"/>
</dbReference>
<dbReference type="GO" id="GO:0071555">
    <property type="term" value="P:cell wall organization"/>
    <property type="evidence" value="ECO:0007669"/>
    <property type="project" value="UniProtKB-KW"/>
</dbReference>
<dbReference type="GO" id="GO:0009252">
    <property type="term" value="P:peptidoglycan biosynthetic process"/>
    <property type="evidence" value="ECO:0007669"/>
    <property type="project" value="UniProtKB-KW"/>
</dbReference>
<dbReference type="GO" id="GO:0008360">
    <property type="term" value="P:regulation of cell shape"/>
    <property type="evidence" value="ECO:0007669"/>
    <property type="project" value="UniProtKB-KW"/>
</dbReference>
<dbReference type="GO" id="GO:0046677">
    <property type="term" value="P:response to antibiotic"/>
    <property type="evidence" value="ECO:0007669"/>
    <property type="project" value="UniProtKB-UniRule"/>
</dbReference>
<dbReference type="HAMAP" id="MF_01006">
    <property type="entry name" value="Undec_diphosphatase"/>
    <property type="match status" value="1"/>
</dbReference>
<dbReference type="InterPro" id="IPR003824">
    <property type="entry name" value="UppP"/>
</dbReference>
<dbReference type="NCBIfam" id="NF001388">
    <property type="entry name" value="PRK00281.1-1"/>
    <property type="match status" value="1"/>
</dbReference>
<dbReference type="NCBIfam" id="NF001389">
    <property type="entry name" value="PRK00281.1-2"/>
    <property type="match status" value="1"/>
</dbReference>
<dbReference type="NCBIfam" id="NF001390">
    <property type="entry name" value="PRK00281.1-4"/>
    <property type="match status" value="1"/>
</dbReference>
<dbReference type="NCBIfam" id="TIGR00753">
    <property type="entry name" value="undec_PP_bacA"/>
    <property type="match status" value="1"/>
</dbReference>
<dbReference type="PANTHER" id="PTHR30622">
    <property type="entry name" value="UNDECAPRENYL-DIPHOSPHATASE"/>
    <property type="match status" value="1"/>
</dbReference>
<dbReference type="PANTHER" id="PTHR30622:SF3">
    <property type="entry name" value="UNDECAPRENYL-DIPHOSPHATASE"/>
    <property type="match status" value="1"/>
</dbReference>
<dbReference type="Pfam" id="PF02673">
    <property type="entry name" value="BacA"/>
    <property type="match status" value="1"/>
</dbReference>